<proteinExistence type="inferred from homology"/>
<organismHost>
    <name type="scientific">Felidae</name>
    <name type="common">cat family</name>
    <dbReference type="NCBI Taxonomy" id="9681"/>
</organismHost>
<protein>
    <recommendedName>
        <fullName>Glyco-Gag protein</fullName>
    </recommendedName>
    <alternativeName>
        <fullName>Gross cell surface antigen</fullName>
    </alternativeName>
    <alternativeName>
        <fullName>glycosylated Pr80 gag</fullName>
        <shortName>gPr80 Gag</shortName>
        <shortName>gag-gPr80</shortName>
    </alternativeName>
</protein>
<reference key="1">
    <citation type="journal article" date="1986" name="Nature">
        <title>A new acute transforming feline retrovirus and relationship of its oncogene v-kit with the protein kinase gene family.</title>
        <authorList>
            <person name="Besmer P."/>
            <person name="Murphy J.E."/>
            <person name="George P.C."/>
            <person name="Qiu F."/>
            <person name="Bergold P.J."/>
            <person name="Lederman L."/>
            <person name="Snyder H.W. Jr."/>
            <person name="Brodeur D."/>
            <person name="Zuckerman E.E."/>
            <person name="Hardy W.D."/>
        </authorList>
    </citation>
    <scope>NUCLEOTIDE SEQUENCE [GENOMIC DNA]</scope>
</reference>
<keyword id="KW-0024">Alternative initiation</keyword>
<keyword id="KW-0325">Glycoprotein</keyword>
<keyword id="KW-1032">Host cell membrane</keyword>
<keyword id="KW-1043">Host membrane</keyword>
<keyword id="KW-0472">Membrane</keyword>
<keyword id="KW-0812">Transmembrane</keyword>
<keyword id="KW-1133">Transmembrane helix</keyword>
<organism>
    <name type="scientific">Feline sarcoma virus (strain Hardy-Zuckerman 4)</name>
    <dbReference type="NCBI Taxonomy" id="11777"/>
    <lineage>
        <taxon>Viruses</taxon>
        <taxon>Riboviria</taxon>
        <taxon>Pararnavirae</taxon>
        <taxon>Artverviricota</taxon>
        <taxon>Revtraviricetes</taxon>
        <taxon>Ortervirales</taxon>
        <taxon>Retroviridae</taxon>
        <taxon>Orthoretrovirinae</taxon>
        <taxon>Gammaretrovirus</taxon>
        <taxon>Hardy-Zuckerman feline sarcoma virus</taxon>
    </lineage>
</organism>
<accession>P0DP83</accession>
<evidence type="ECO:0000250" key="1">
    <source>
        <dbReference type="UniProtKB" id="P0DOG8"/>
    </source>
</evidence>
<evidence type="ECO:0000255" key="2"/>
<evidence type="ECO:0000255" key="3">
    <source>
        <dbReference type="PROSITE-ProRule" id="PRU00498"/>
    </source>
</evidence>
<evidence type="ECO:0000256" key="4">
    <source>
        <dbReference type="SAM" id="MobiDB-lite"/>
    </source>
</evidence>
<evidence type="ECO:0000305" key="5"/>
<name>GGAG_FSVHZ</name>
<comment type="function">
    <text evidence="1">Plays a role in viral particle release. Presumably acts by facilitating the fission of the virion bud at the cell surface.</text>
</comment>
<comment type="subcellular location">
    <subcellularLocation>
        <location evidence="1 2">Host cell membrane</location>
        <topology evidence="1">Single-pass membrane protein</topology>
    </subcellularLocation>
</comment>
<comment type="alternative products">
    <event type="alternative initiation"/>
    <isoform>
        <id>P0DP83-1</id>
        <name>Glyco-Gag protein</name>
        <sequence type="displayed"/>
    </isoform>
    <isoform>
        <id>P04322-1</id>
        <name>Gag polyprotein</name>
        <sequence type="external"/>
    </isoform>
</comment>
<comment type="PTM">
    <text evidence="1">Glycosylated by host.</text>
</comment>
<comment type="PTM">
    <text evidence="1">Cleaved by host near the middle of the molecule, releasing the c-terminal half containing capsid and nucleoprotein domains op GAG.</text>
</comment>
<dbReference type="EMBL" id="X03711">
    <property type="status" value="NOT_ANNOTATED_CDS"/>
    <property type="molecule type" value="Genomic_DNA"/>
</dbReference>
<dbReference type="SMR" id="P0DP83"/>
<dbReference type="Proteomes" id="UP000242259">
    <property type="component" value="Genome"/>
</dbReference>
<dbReference type="GO" id="GO:0020002">
    <property type="term" value="C:host cell plasma membrane"/>
    <property type="evidence" value="ECO:0007669"/>
    <property type="project" value="UniProtKB-SubCell"/>
</dbReference>
<dbReference type="GO" id="GO:0016020">
    <property type="term" value="C:membrane"/>
    <property type="evidence" value="ECO:0007669"/>
    <property type="project" value="UniProtKB-KW"/>
</dbReference>
<dbReference type="GO" id="GO:0019068">
    <property type="term" value="P:virion assembly"/>
    <property type="evidence" value="ECO:0007669"/>
    <property type="project" value="InterPro"/>
</dbReference>
<dbReference type="Gene3D" id="1.10.150.180">
    <property type="entry name" value="Gamma-retroviral matrix domain"/>
    <property type="match status" value="1"/>
</dbReference>
<dbReference type="Gene3D" id="1.10.375.10">
    <property type="entry name" value="Human Immunodeficiency Virus Type 1 Capsid Protein"/>
    <property type="match status" value="1"/>
</dbReference>
<dbReference type="InterPro" id="IPR000840">
    <property type="entry name" value="G_retro_matrix"/>
</dbReference>
<dbReference type="InterPro" id="IPR036946">
    <property type="entry name" value="G_retro_matrix_sf"/>
</dbReference>
<dbReference type="InterPro" id="IPR002079">
    <property type="entry name" value="Gag_p12"/>
</dbReference>
<dbReference type="InterPro" id="IPR003036">
    <property type="entry name" value="Gag_P30"/>
</dbReference>
<dbReference type="InterPro" id="IPR008919">
    <property type="entry name" value="Retrov_capsid_N"/>
</dbReference>
<dbReference type="InterPro" id="IPR050462">
    <property type="entry name" value="Retroviral_Gag-Pol_poly"/>
</dbReference>
<dbReference type="InterPro" id="IPR010999">
    <property type="entry name" value="Retrovr_matrix"/>
</dbReference>
<dbReference type="PANTHER" id="PTHR33166">
    <property type="entry name" value="GAG_P30 DOMAIN-CONTAINING PROTEIN"/>
    <property type="match status" value="1"/>
</dbReference>
<dbReference type="Pfam" id="PF01140">
    <property type="entry name" value="Gag_MA"/>
    <property type="match status" value="1"/>
</dbReference>
<dbReference type="Pfam" id="PF01141">
    <property type="entry name" value="Gag_p12"/>
    <property type="match status" value="1"/>
</dbReference>
<dbReference type="Pfam" id="PF02093">
    <property type="entry name" value="Gag_p30"/>
    <property type="match status" value="1"/>
</dbReference>
<dbReference type="SUPFAM" id="SSF47836">
    <property type="entry name" value="Retroviral matrix proteins"/>
    <property type="match status" value="1"/>
</dbReference>
<dbReference type="SUPFAM" id="SSF47943">
    <property type="entry name" value="Retrovirus capsid protein, N-terminal core domain"/>
    <property type="match status" value="1"/>
</dbReference>
<sequence>MSGASSGTAIGAHLFGVSPECRVLIGDEGAGPSKSLSEVSFSVWYQSRAARLVIFCLVASFLVPCLTFLIAETVMGQTIATPLSLTLDHWSEVRARAHNQGVEVRKKKWVTLCEAEWVMMNVGWPREGTFSLDNISQVEKKIFAPGPYGHPDQVPYITTWRSLATDPPSWVRPFLPPPKPPTPLPQPLSPQPSAPLTSSLYPVLPKTDPPKPPVLPPDPSSPLIDLLTEEPPPYPGGHGPLPSGPRTPTASPIASRLRERRENPAEESQALPLREGPNNRPQYWPFSASDLYNWKSHNPPFSQDPVALTNLIESILVTHQPTWDDCQQLLQALLTGEERQRVLLEARKQVPGEDGRPTQLPNVIDETFPLTRPNWDFATPAGREHLRLYRQLLLAGLRGAARRPTNLAQVKQVV</sequence>
<feature type="chain" id="PRO_0000441133" description="Glyco-Gag protein">
    <location>
        <begin position="1"/>
        <end position="414"/>
    </location>
</feature>
<feature type="topological domain" description="Cytoplasmic" evidence="5">
    <location>
        <begin position="1"/>
        <end position="51"/>
    </location>
</feature>
<feature type="transmembrane region" description="Helical" evidence="2">
    <location>
        <begin position="52"/>
        <end position="72"/>
    </location>
</feature>
<feature type="topological domain" description="Extracellular" evidence="5">
    <location>
        <begin position="73"/>
        <end position="414"/>
    </location>
</feature>
<feature type="region of interest" description="Disordered" evidence="4">
    <location>
        <begin position="171"/>
        <end position="282"/>
    </location>
</feature>
<feature type="compositionally biased region" description="Pro residues" evidence="4">
    <location>
        <begin position="174"/>
        <end position="193"/>
    </location>
</feature>
<feature type="compositionally biased region" description="Low complexity" evidence="4">
    <location>
        <begin position="194"/>
        <end position="206"/>
    </location>
</feature>
<feature type="compositionally biased region" description="Pro residues" evidence="4">
    <location>
        <begin position="210"/>
        <end position="220"/>
    </location>
</feature>
<feature type="glycosylation site" description="N-linked (GlcNAc...) asparagine; by host" evidence="3">
    <location>
        <position position="134"/>
    </location>
</feature>